<sequence>MNIAKLIDHTILKANTTKEDVMKVIEEAKEYKFASVCINPTWVKLAAEELAGHDVDVCTVIGFPLGASTTETKAFETKDAIAKGATEVDMVINVGALKDGDNELVEKDIYEVVQAAKGKALVKVIIETCLLTDEEKVRACELSVKAGADFVKTSTGFSTGGATAEDIALMRKTVGPNVGVKASGGVRTREDAEKMVAAGASRVGASASVAIVLNDAKGATDNY</sequence>
<dbReference type="EC" id="4.1.2.4" evidence="1"/>
<dbReference type="EMBL" id="AE017355">
    <property type="protein sequence ID" value="AAT63350.1"/>
    <property type="molecule type" value="Genomic_DNA"/>
</dbReference>
<dbReference type="RefSeq" id="WP_001017446.1">
    <property type="nucleotide sequence ID" value="NC_005957.1"/>
</dbReference>
<dbReference type="RefSeq" id="YP_036064.1">
    <property type="nucleotide sequence ID" value="NC_005957.1"/>
</dbReference>
<dbReference type="SMR" id="Q6HK62"/>
<dbReference type="GeneID" id="45021821"/>
<dbReference type="KEGG" id="btk:BT9727_1732"/>
<dbReference type="PATRIC" id="fig|281309.8.peg.1825"/>
<dbReference type="HOGENOM" id="CLU_053595_0_1_9"/>
<dbReference type="UniPathway" id="UPA00002">
    <property type="reaction ID" value="UER00468"/>
</dbReference>
<dbReference type="Proteomes" id="UP000001301">
    <property type="component" value="Chromosome"/>
</dbReference>
<dbReference type="GO" id="GO:0005737">
    <property type="term" value="C:cytoplasm"/>
    <property type="evidence" value="ECO:0007669"/>
    <property type="project" value="UniProtKB-SubCell"/>
</dbReference>
<dbReference type="GO" id="GO:0004139">
    <property type="term" value="F:deoxyribose-phosphate aldolase activity"/>
    <property type="evidence" value="ECO:0007669"/>
    <property type="project" value="UniProtKB-UniRule"/>
</dbReference>
<dbReference type="GO" id="GO:0006018">
    <property type="term" value="P:2-deoxyribose 1-phosphate catabolic process"/>
    <property type="evidence" value="ECO:0007669"/>
    <property type="project" value="UniProtKB-UniRule"/>
</dbReference>
<dbReference type="GO" id="GO:0016052">
    <property type="term" value="P:carbohydrate catabolic process"/>
    <property type="evidence" value="ECO:0007669"/>
    <property type="project" value="TreeGrafter"/>
</dbReference>
<dbReference type="GO" id="GO:0009264">
    <property type="term" value="P:deoxyribonucleotide catabolic process"/>
    <property type="evidence" value="ECO:0007669"/>
    <property type="project" value="InterPro"/>
</dbReference>
<dbReference type="CDD" id="cd00959">
    <property type="entry name" value="DeoC"/>
    <property type="match status" value="1"/>
</dbReference>
<dbReference type="FunFam" id="3.20.20.70:FF:000044">
    <property type="entry name" value="Deoxyribose-phosphate aldolase"/>
    <property type="match status" value="1"/>
</dbReference>
<dbReference type="Gene3D" id="3.20.20.70">
    <property type="entry name" value="Aldolase class I"/>
    <property type="match status" value="1"/>
</dbReference>
<dbReference type="HAMAP" id="MF_00114">
    <property type="entry name" value="DeoC_type1"/>
    <property type="match status" value="1"/>
</dbReference>
<dbReference type="InterPro" id="IPR013785">
    <property type="entry name" value="Aldolase_TIM"/>
</dbReference>
<dbReference type="InterPro" id="IPR011343">
    <property type="entry name" value="DeoC"/>
</dbReference>
<dbReference type="InterPro" id="IPR002915">
    <property type="entry name" value="DeoC/FbaB/LacD_aldolase"/>
</dbReference>
<dbReference type="InterPro" id="IPR028581">
    <property type="entry name" value="DeoC_typeI"/>
</dbReference>
<dbReference type="NCBIfam" id="TIGR00126">
    <property type="entry name" value="deoC"/>
    <property type="match status" value="1"/>
</dbReference>
<dbReference type="PANTHER" id="PTHR10889">
    <property type="entry name" value="DEOXYRIBOSE-PHOSPHATE ALDOLASE"/>
    <property type="match status" value="1"/>
</dbReference>
<dbReference type="PANTHER" id="PTHR10889:SF1">
    <property type="entry name" value="DEOXYRIBOSE-PHOSPHATE ALDOLASE"/>
    <property type="match status" value="1"/>
</dbReference>
<dbReference type="Pfam" id="PF01791">
    <property type="entry name" value="DeoC"/>
    <property type="match status" value="1"/>
</dbReference>
<dbReference type="PIRSF" id="PIRSF001357">
    <property type="entry name" value="DeoC"/>
    <property type="match status" value="1"/>
</dbReference>
<dbReference type="SMART" id="SM01133">
    <property type="entry name" value="DeoC"/>
    <property type="match status" value="1"/>
</dbReference>
<dbReference type="SUPFAM" id="SSF51569">
    <property type="entry name" value="Aldolase"/>
    <property type="match status" value="1"/>
</dbReference>
<proteinExistence type="inferred from homology"/>
<gene>
    <name evidence="1" type="primary">deoC</name>
    <name type="ordered locus">BT9727_1732</name>
</gene>
<organism>
    <name type="scientific">Bacillus thuringiensis subsp. konkukian (strain 97-27)</name>
    <dbReference type="NCBI Taxonomy" id="281309"/>
    <lineage>
        <taxon>Bacteria</taxon>
        <taxon>Bacillati</taxon>
        <taxon>Bacillota</taxon>
        <taxon>Bacilli</taxon>
        <taxon>Bacillales</taxon>
        <taxon>Bacillaceae</taxon>
        <taxon>Bacillus</taxon>
        <taxon>Bacillus cereus group</taxon>
    </lineage>
</organism>
<comment type="function">
    <text evidence="1">Catalyzes a reversible aldol reaction between acetaldehyde and D-glyceraldehyde 3-phosphate to generate 2-deoxy-D-ribose 5-phosphate.</text>
</comment>
<comment type="catalytic activity">
    <reaction evidence="1">
        <text>2-deoxy-D-ribose 5-phosphate = D-glyceraldehyde 3-phosphate + acetaldehyde</text>
        <dbReference type="Rhea" id="RHEA:12821"/>
        <dbReference type="ChEBI" id="CHEBI:15343"/>
        <dbReference type="ChEBI" id="CHEBI:59776"/>
        <dbReference type="ChEBI" id="CHEBI:62877"/>
        <dbReference type="EC" id="4.1.2.4"/>
    </reaction>
</comment>
<comment type="pathway">
    <text evidence="1">Carbohydrate degradation; 2-deoxy-D-ribose 1-phosphate degradation; D-glyceraldehyde 3-phosphate and acetaldehyde from 2-deoxy-alpha-D-ribose 1-phosphate: step 2/2.</text>
</comment>
<comment type="subcellular location">
    <subcellularLocation>
        <location evidence="1">Cytoplasm</location>
    </subcellularLocation>
</comment>
<comment type="similarity">
    <text evidence="1">Belongs to the DeoC/FbaB aldolase family. DeoC type 1 subfamily.</text>
</comment>
<protein>
    <recommendedName>
        <fullName evidence="1">Deoxyribose-phosphate aldolase</fullName>
        <shortName evidence="1">DERA</shortName>
        <ecNumber evidence="1">4.1.2.4</ecNumber>
    </recommendedName>
    <alternativeName>
        <fullName evidence="1">2-deoxy-D-ribose 5-phosphate aldolase</fullName>
    </alternativeName>
    <alternativeName>
        <fullName evidence="1">Phosphodeoxyriboaldolase</fullName>
        <shortName evidence="1">Deoxyriboaldolase</shortName>
    </alternativeName>
</protein>
<keyword id="KW-0963">Cytoplasm</keyword>
<keyword id="KW-0456">Lyase</keyword>
<keyword id="KW-0704">Schiff base</keyword>
<evidence type="ECO:0000255" key="1">
    <source>
        <dbReference type="HAMAP-Rule" id="MF_00114"/>
    </source>
</evidence>
<accession>Q6HK62</accession>
<feature type="chain" id="PRO_0000231533" description="Deoxyribose-phosphate aldolase">
    <location>
        <begin position="1"/>
        <end position="223"/>
    </location>
</feature>
<feature type="active site" description="Proton donor/acceptor" evidence="1">
    <location>
        <position position="89"/>
    </location>
</feature>
<feature type="active site" description="Schiff-base intermediate with acetaldehyde" evidence="1">
    <location>
        <position position="152"/>
    </location>
</feature>
<feature type="active site" description="Proton donor/acceptor" evidence="1">
    <location>
        <position position="181"/>
    </location>
</feature>
<name>DEOC_BACHK</name>
<reference key="1">
    <citation type="journal article" date="2006" name="J. Bacteriol.">
        <title>Pathogenomic sequence analysis of Bacillus cereus and Bacillus thuringiensis isolates closely related to Bacillus anthracis.</title>
        <authorList>
            <person name="Han C.S."/>
            <person name="Xie G."/>
            <person name="Challacombe J.F."/>
            <person name="Altherr M.R."/>
            <person name="Bhotika S.S."/>
            <person name="Bruce D."/>
            <person name="Campbell C.S."/>
            <person name="Campbell M.L."/>
            <person name="Chen J."/>
            <person name="Chertkov O."/>
            <person name="Cleland C."/>
            <person name="Dimitrijevic M."/>
            <person name="Doggett N.A."/>
            <person name="Fawcett J.J."/>
            <person name="Glavina T."/>
            <person name="Goodwin L.A."/>
            <person name="Hill K.K."/>
            <person name="Hitchcock P."/>
            <person name="Jackson P.J."/>
            <person name="Keim P."/>
            <person name="Kewalramani A.R."/>
            <person name="Longmire J."/>
            <person name="Lucas S."/>
            <person name="Malfatti S."/>
            <person name="McMurry K."/>
            <person name="Meincke L.J."/>
            <person name="Misra M."/>
            <person name="Moseman B.L."/>
            <person name="Mundt M."/>
            <person name="Munk A.C."/>
            <person name="Okinaka R.T."/>
            <person name="Parson-Quintana B."/>
            <person name="Reilly L.P."/>
            <person name="Richardson P."/>
            <person name="Robinson D.L."/>
            <person name="Rubin E."/>
            <person name="Saunders E."/>
            <person name="Tapia R."/>
            <person name="Tesmer J.G."/>
            <person name="Thayer N."/>
            <person name="Thompson L.S."/>
            <person name="Tice H."/>
            <person name="Ticknor L.O."/>
            <person name="Wills P.L."/>
            <person name="Brettin T.S."/>
            <person name="Gilna P."/>
        </authorList>
    </citation>
    <scope>NUCLEOTIDE SEQUENCE [LARGE SCALE GENOMIC DNA]</scope>
    <source>
        <strain>97-27</strain>
    </source>
</reference>